<keyword id="KW-0001">2Fe-2S</keyword>
<keyword id="KW-0004">4Fe-4S</keyword>
<keyword id="KW-0093">Biotin biosynthesis</keyword>
<keyword id="KW-0408">Iron</keyword>
<keyword id="KW-0411">Iron-sulfur</keyword>
<keyword id="KW-0479">Metal-binding</keyword>
<keyword id="KW-0949">S-adenosyl-L-methionine</keyword>
<keyword id="KW-0808">Transferase</keyword>
<protein>
    <recommendedName>
        <fullName evidence="1">Biotin synthase</fullName>
        <ecNumber evidence="1">2.8.1.6</ecNumber>
    </recommendedName>
</protein>
<sequence length="346" mass="38714">MAHHARWTLSQVTELFDKPLLDLLFEAQTIHRQHFDPRQVQVSTLLSIKTGACPEDCKYCPQSSRYKTGLETERLMEVEQVLDSARKAKNAGSTRFCMGAAWKNPHERDMPYLEQMVQGVKAMGLEACMTLGTLDETQAQRLASAGLDYYNHNLDTSPEFYGNIITTRTYQERLDTLDKVRDAGIKVCSGGIVGLGETVKDRAGLLLQLANLPTPPESVPINMLVKVKGTPLADNDDVDAFDFIRTIAVARIMMPTSFVRLSAGREQMNEQTQAMCFMAGANSIFYGCKLLTTPNPEEDKDVQLFRKLGLNPQQTDVMTGDNEQQQKLEEQIFNADTDQFYNAAAL</sequence>
<gene>
    <name evidence="1" type="primary">bioB</name>
</gene>
<feature type="chain" id="PRO_0000185553" description="Biotin synthase">
    <location>
        <begin position="1"/>
        <end position="346"/>
    </location>
</feature>
<feature type="domain" description="Radical SAM core" evidence="2">
    <location>
        <begin position="38"/>
        <end position="256"/>
    </location>
</feature>
<feature type="binding site" evidence="1">
    <location>
        <position position="53"/>
    </location>
    <ligand>
        <name>[4Fe-4S] cluster</name>
        <dbReference type="ChEBI" id="CHEBI:49883"/>
        <note>4Fe-4S-S-AdoMet</note>
    </ligand>
</feature>
<feature type="binding site" evidence="1">
    <location>
        <position position="57"/>
    </location>
    <ligand>
        <name>[4Fe-4S] cluster</name>
        <dbReference type="ChEBI" id="CHEBI:49883"/>
        <note>4Fe-4S-S-AdoMet</note>
    </ligand>
</feature>
<feature type="binding site" evidence="1">
    <location>
        <position position="60"/>
    </location>
    <ligand>
        <name>[4Fe-4S] cluster</name>
        <dbReference type="ChEBI" id="CHEBI:49883"/>
        <note>4Fe-4S-S-AdoMet</note>
    </ligand>
</feature>
<feature type="binding site" evidence="1">
    <location>
        <position position="97"/>
    </location>
    <ligand>
        <name>[2Fe-2S] cluster</name>
        <dbReference type="ChEBI" id="CHEBI:190135"/>
    </ligand>
</feature>
<feature type="binding site" evidence="1">
    <location>
        <position position="128"/>
    </location>
    <ligand>
        <name>[2Fe-2S] cluster</name>
        <dbReference type="ChEBI" id="CHEBI:190135"/>
    </ligand>
</feature>
<feature type="binding site" evidence="1">
    <location>
        <position position="188"/>
    </location>
    <ligand>
        <name>[2Fe-2S] cluster</name>
        <dbReference type="ChEBI" id="CHEBI:190135"/>
    </ligand>
</feature>
<feature type="binding site" evidence="1">
    <location>
        <position position="260"/>
    </location>
    <ligand>
        <name>[2Fe-2S] cluster</name>
        <dbReference type="ChEBI" id="CHEBI:190135"/>
    </ligand>
</feature>
<proteinExistence type="inferred from homology"/>
<name>BIOB_PSEVU</name>
<comment type="function">
    <text evidence="1">Catalyzes the conversion of dethiobiotin (DTB) to biotin by the insertion of a sulfur atom into dethiobiotin via a radical-based mechanism.</text>
</comment>
<comment type="catalytic activity">
    <reaction evidence="1">
        <text>(4R,5S)-dethiobiotin + (sulfur carrier)-SH + 2 reduced [2Fe-2S]-[ferredoxin] + 2 S-adenosyl-L-methionine = (sulfur carrier)-H + biotin + 2 5'-deoxyadenosine + 2 L-methionine + 2 oxidized [2Fe-2S]-[ferredoxin]</text>
        <dbReference type="Rhea" id="RHEA:22060"/>
        <dbReference type="Rhea" id="RHEA-COMP:10000"/>
        <dbReference type="Rhea" id="RHEA-COMP:10001"/>
        <dbReference type="Rhea" id="RHEA-COMP:14737"/>
        <dbReference type="Rhea" id="RHEA-COMP:14739"/>
        <dbReference type="ChEBI" id="CHEBI:17319"/>
        <dbReference type="ChEBI" id="CHEBI:29917"/>
        <dbReference type="ChEBI" id="CHEBI:33737"/>
        <dbReference type="ChEBI" id="CHEBI:33738"/>
        <dbReference type="ChEBI" id="CHEBI:57586"/>
        <dbReference type="ChEBI" id="CHEBI:57844"/>
        <dbReference type="ChEBI" id="CHEBI:59789"/>
        <dbReference type="ChEBI" id="CHEBI:64428"/>
        <dbReference type="ChEBI" id="CHEBI:149473"/>
        <dbReference type="EC" id="2.8.1.6"/>
    </reaction>
</comment>
<comment type="cofactor">
    <cofactor evidence="1">
        <name>[4Fe-4S] cluster</name>
        <dbReference type="ChEBI" id="CHEBI:49883"/>
    </cofactor>
    <text evidence="1">Binds 1 [4Fe-4S] cluster. The cluster is coordinated with 3 cysteines and an exchangeable S-adenosyl-L-methionine.</text>
</comment>
<comment type="cofactor">
    <cofactor evidence="1">
        <name>[2Fe-2S] cluster</name>
        <dbReference type="ChEBI" id="CHEBI:190135"/>
    </cofactor>
    <text evidence="1">Binds 1 [2Fe-2S] cluster. The cluster is coordinated with 3 cysteines and 1 arginine.</text>
</comment>
<comment type="pathway">
    <text evidence="1">Cofactor biosynthesis; biotin biosynthesis; biotin from 7,8-diaminononanoate: step 2/2.</text>
</comment>
<comment type="subunit">
    <text evidence="1">Homodimer.</text>
</comment>
<comment type="similarity">
    <text evidence="1">Belongs to the radical SAM superfamily. Biotin synthase family.</text>
</comment>
<evidence type="ECO:0000255" key="1">
    <source>
        <dbReference type="HAMAP-Rule" id="MF_01694"/>
    </source>
</evidence>
<evidence type="ECO:0000255" key="2">
    <source>
        <dbReference type="PROSITE-ProRule" id="PRU01266"/>
    </source>
</evidence>
<reference key="1">
    <citation type="journal article" date="1996" name="Gene">
        <title>Isolation and characterization of the Erwinia herbicola bio operon and the sequences of the bioA and bioB genes.</title>
        <authorList>
            <person name="Wu C.-H."/>
            <person name="Chen H.-Y."/>
            <person name="Shiuan D."/>
        </authorList>
    </citation>
    <scope>NUCLEOTIDE SEQUENCE [GENOMIC DNA]</scope>
    <source>
        <strain>ATCC 39368 / Eho10</strain>
    </source>
</reference>
<dbReference type="EC" id="2.8.1.6" evidence="1"/>
<dbReference type="EMBL" id="AH006563">
    <property type="protein sequence ID" value="AAC44534.1"/>
    <property type="molecule type" value="Genomic_DNA"/>
</dbReference>
<dbReference type="PIR" id="JC5006">
    <property type="entry name" value="JC5006"/>
</dbReference>
<dbReference type="SMR" id="Q47862"/>
<dbReference type="UniPathway" id="UPA00078">
    <property type="reaction ID" value="UER00162"/>
</dbReference>
<dbReference type="GO" id="GO:0051537">
    <property type="term" value="F:2 iron, 2 sulfur cluster binding"/>
    <property type="evidence" value="ECO:0007669"/>
    <property type="project" value="UniProtKB-KW"/>
</dbReference>
<dbReference type="GO" id="GO:0051539">
    <property type="term" value="F:4 iron, 4 sulfur cluster binding"/>
    <property type="evidence" value="ECO:0007669"/>
    <property type="project" value="UniProtKB-KW"/>
</dbReference>
<dbReference type="GO" id="GO:0004076">
    <property type="term" value="F:biotin synthase activity"/>
    <property type="evidence" value="ECO:0007669"/>
    <property type="project" value="UniProtKB-UniRule"/>
</dbReference>
<dbReference type="GO" id="GO:0005506">
    <property type="term" value="F:iron ion binding"/>
    <property type="evidence" value="ECO:0007669"/>
    <property type="project" value="UniProtKB-UniRule"/>
</dbReference>
<dbReference type="GO" id="GO:0009102">
    <property type="term" value="P:biotin biosynthetic process"/>
    <property type="evidence" value="ECO:0007669"/>
    <property type="project" value="UniProtKB-UniRule"/>
</dbReference>
<dbReference type="CDD" id="cd01335">
    <property type="entry name" value="Radical_SAM"/>
    <property type="match status" value="1"/>
</dbReference>
<dbReference type="FunFam" id="3.20.20.70:FF:000011">
    <property type="entry name" value="Biotin synthase"/>
    <property type="match status" value="1"/>
</dbReference>
<dbReference type="Gene3D" id="3.20.20.70">
    <property type="entry name" value="Aldolase class I"/>
    <property type="match status" value="1"/>
</dbReference>
<dbReference type="HAMAP" id="MF_01694">
    <property type="entry name" value="BioB"/>
    <property type="match status" value="1"/>
</dbReference>
<dbReference type="InterPro" id="IPR013785">
    <property type="entry name" value="Aldolase_TIM"/>
</dbReference>
<dbReference type="InterPro" id="IPR010722">
    <property type="entry name" value="BATS_dom"/>
</dbReference>
<dbReference type="InterPro" id="IPR002684">
    <property type="entry name" value="Biotin_synth/BioAB"/>
</dbReference>
<dbReference type="InterPro" id="IPR024177">
    <property type="entry name" value="Biotin_synthase"/>
</dbReference>
<dbReference type="InterPro" id="IPR006638">
    <property type="entry name" value="Elp3/MiaA/NifB-like_rSAM"/>
</dbReference>
<dbReference type="InterPro" id="IPR007197">
    <property type="entry name" value="rSAM"/>
</dbReference>
<dbReference type="NCBIfam" id="TIGR00433">
    <property type="entry name" value="bioB"/>
    <property type="match status" value="1"/>
</dbReference>
<dbReference type="PANTHER" id="PTHR22976">
    <property type="entry name" value="BIOTIN SYNTHASE"/>
    <property type="match status" value="1"/>
</dbReference>
<dbReference type="PANTHER" id="PTHR22976:SF2">
    <property type="entry name" value="BIOTIN SYNTHASE, MITOCHONDRIAL"/>
    <property type="match status" value="1"/>
</dbReference>
<dbReference type="Pfam" id="PF06968">
    <property type="entry name" value="BATS"/>
    <property type="match status" value="1"/>
</dbReference>
<dbReference type="Pfam" id="PF04055">
    <property type="entry name" value="Radical_SAM"/>
    <property type="match status" value="1"/>
</dbReference>
<dbReference type="PIRSF" id="PIRSF001619">
    <property type="entry name" value="Biotin_synth"/>
    <property type="match status" value="1"/>
</dbReference>
<dbReference type="SFLD" id="SFLDF00272">
    <property type="entry name" value="biotin_synthase"/>
    <property type="match status" value="1"/>
</dbReference>
<dbReference type="SFLD" id="SFLDS00029">
    <property type="entry name" value="Radical_SAM"/>
    <property type="match status" value="1"/>
</dbReference>
<dbReference type="SMART" id="SM00876">
    <property type="entry name" value="BATS"/>
    <property type="match status" value="1"/>
</dbReference>
<dbReference type="SMART" id="SM00729">
    <property type="entry name" value="Elp3"/>
    <property type="match status" value="1"/>
</dbReference>
<dbReference type="SUPFAM" id="SSF102114">
    <property type="entry name" value="Radical SAM enzymes"/>
    <property type="match status" value="1"/>
</dbReference>
<dbReference type="PROSITE" id="PS51918">
    <property type="entry name" value="RADICAL_SAM"/>
    <property type="match status" value="1"/>
</dbReference>
<accession>Q47862</accession>
<organism>
    <name type="scientific">Pseudescherichia vulneris</name>
    <name type="common">Escherichia vulneris</name>
    <dbReference type="NCBI Taxonomy" id="566"/>
    <lineage>
        <taxon>Bacteria</taxon>
        <taxon>Pseudomonadati</taxon>
        <taxon>Pseudomonadota</taxon>
        <taxon>Gammaproteobacteria</taxon>
        <taxon>Enterobacterales</taxon>
        <taxon>Enterobacteriaceae</taxon>
        <taxon>Pseudescherichia</taxon>
    </lineage>
</organism>